<keyword id="KW-0687">Ribonucleoprotein</keyword>
<keyword id="KW-0689">Ribosomal protein</keyword>
<keyword id="KW-0694">RNA-binding</keyword>
<keyword id="KW-0699">rRNA-binding</keyword>
<comment type="function">
    <text evidence="1">Binds together with bS18 to 16S ribosomal RNA.</text>
</comment>
<comment type="similarity">
    <text evidence="1">Belongs to the bacterial ribosomal protein bS6 family.</text>
</comment>
<gene>
    <name evidence="1" type="primary">rpsF</name>
    <name type="ordered locus">CAB787</name>
</gene>
<protein>
    <recommendedName>
        <fullName evidence="1">Small ribosomal subunit protein bS6</fullName>
    </recommendedName>
    <alternativeName>
        <fullName evidence="2">30S ribosomal protein S6</fullName>
    </alternativeName>
</protein>
<dbReference type="EMBL" id="CR848038">
    <property type="protein sequence ID" value="CAH64229.1"/>
    <property type="molecule type" value="Genomic_DNA"/>
</dbReference>
<dbReference type="RefSeq" id="WP_006343479.1">
    <property type="nucleotide sequence ID" value="NC_004552.2"/>
</dbReference>
<dbReference type="SMR" id="Q5L565"/>
<dbReference type="GeneID" id="93024339"/>
<dbReference type="KEGG" id="cab:CAB787"/>
<dbReference type="eggNOG" id="COG0360">
    <property type="taxonomic scope" value="Bacteria"/>
</dbReference>
<dbReference type="HOGENOM" id="CLU_113441_5_2_0"/>
<dbReference type="OrthoDB" id="9812702at2"/>
<dbReference type="Proteomes" id="UP000001012">
    <property type="component" value="Chromosome"/>
</dbReference>
<dbReference type="GO" id="GO:0005737">
    <property type="term" value="C:cytoplasm"/>
    <property type="evidence" value="ECO:0007669"/>
    <property type="project" value="UniProtKB-ARBA"/>
</dbReference>
<dbReference type="GO" id="GO:1990904">
    <property type="term" value="C:ribonucleoprotein complex"/>
    <property type="evidence" value="ECO:0007669"/>
    <property type="project" value="UniProtKB-KW"/>
</dbReference>
<dbReference type="GO" id="GO:0005840">
    <property type="term" value="C:ribosome"/>
    <property type="evidence" value="ECO:0007669"/>
    <property type="project" value="UniProtKB-KW"/>
</dbReference>
<dbReference type="GO" id="GO:0070181">
    <property type="term" value="F:small ribosomal subunit rRNA binding"/>
    <property type="evidence" value="ECO:0007669"/>
    <property type="project" value="TreeGrafter"/>
</dbReference>
<dbReference type="GO" id="GO:0003735">
    <property type="term" value="F:structural constituent of ribosome"/>
    <property type="evidence" value="ECO:0007669"/>
    <property type="project" value="InterPro"/>
</dbReference>
<dbReference type="GO" id="GO:0006412">
    <property type="term" value="P:translation"/>
    <property type="evidence" value="ECO:0007669"/>
    <property type="project" value="UniProtKB-UniRule"/>
</dbReference>
<dbReference type="CDD" id="cd00473">
    <property type="entry name" value="bS6"/>
    <property type="match status" value="1"/>
</dbReference>
<dbReference type="Gene3D" id="3.30.70.60">
    <property type="match status" value="1"/>
</dbReference>
<dbReference type="HAMAP" id="MF_00360">
    <property type="entry name" value="Ribosomal_bS6"/>
    <property type="match status" value="1"/>
</dbReference>
<dbReference type="InterPro" id="IPR000529">
    <property type="entry name" value="Ribosomal_bS6"/>
</dbReference>
<dbReference type="InterPro" id="IPR035980">
    <property type="entry name" value="Ribosomal_bS6_sf"/>
</dbReference>
<dbReference type="InterPro" id="IPR020814">
    <property type="entry name" value="Ribosomal_S6_plastid/chlpt"/>
</dbReference>
<dbReference type="InterPro" id="IPR014717">
    <property type="entry name" value="Transl_elong_EF1B/ribsomal_bS6"/>
</dbReference>
<dbReference type="NCBIfam" id="TIGR00166">
    <property type="entry name" value="S6"/>
    <property type="match status" value="1"/>
</dbReference>
<dbReference type="PANTHER" id="PTHR21011">
    <property type="entry name" value="MITOCHONDRIAL 28S RIBOSOMAL PROTEIN S6"/>
    <property type="match status" value="1"/>
</dbReference>
<dbReference type="PANTHER" id="PTHR21011:SF1">
    <property type="entry name" value="SMALL RIBOSOMAL SUBUNIT PROTEIN BS6M"/>
    <property type="match status" value="1"/>
</dbReference>
<dbReference type="Pfam" id="PF01250">
    <property type="entry name" value="Ribosomal_S6"/>
    <property type="match status" value="1"/>
</dbReference>
<dbReference type="SUPFAM" id="SSF54995">
    <property type="entry name" value="Ribosomal protein S6"/>
    <property type="match status" value="1"/>
</dbReference>
<sequence>MKEKTTQLYEGAYVFSVTLSEEARRKALEKVTSGITNYGGEILKIHDQGRKKLAYTIRGAREGYYYLIYFTVVPGVIAELWKEYHLNEDLLRFLTLKTDAVKEVLEFASLPE</sequence>
<accession>Q5L565</accession>
<feature type="chain" id="PRO_0000229532" description="Small ribosomal subunit protein bS6">
    <location>
        <begin position="1"/>
        <end position="112"/>
    </location>
</feature>
<organism>
    <name type="scientific">Chlamydia abortus (strain DSM 27085 / S26/3)</name>
    <name type="common">Chlamydophila abortus</name>
    <dbReference type="NCBI Taxonomy" id="218497"/>
    <lineage>
        <taxon>Bacteria</taxon>
        <taxon>Pseudomonadati</taxon>
        <taxon>Chlamydiota</taxon>
        <taxon>Chlamydiia</taxon>
        <taxon>Chlamydiales</taxon>
        <taxon>Chlamydiaceae</taxon>
        <taxon>Chlamydia/Chlamydophila group</taxon>
        <taxon>Chlamydia</taxon>
    </lineage>
</organism>
<name>RS6_CHLAB</name>
<reference key="1">
    <citation type="journal article" date="2005" name="Genome Res.">
        <title>The Chlamydophila abortus genome sequence reveals an array of variable proteins that contribute to interspecies variation.</title>
        <authorList>
            <person name="Thomson N.R."/>
            <person name="Yeats C."/>
            <person name="Bell K."/>
            <person name="Holden M.T.G."/>
            <person name="Bentley S.D."/>
            <person name="Livingstone M."/>
            <person name="Cerdeno-Tarraga A.-M."/>
            <person name="Harris B."/>
            <person name="Doggett J."/>
            <person name="Ormond D."/>
            <person name="Mungall K."/>
            <person name="Clarke K."/>
            <person name="Feltwell T."/>
            <person name="Hance Z."/>
            <person name="Sanders M."/>
            <person name="Quail M.A."/>
            <person name="Price C."/>
            <person name="Barrell B.G."/>
            <person name="Parkhill J."/>
            <person name="Longbottom D."/>
        </authorList>
    </citation>
    <scope>NUCLEOTIDE SEQUENCE [LARGE SCALE GENOMIC DNA]</scope>
    <source>
        <strain>DSM 27085 / S26/3</strain>
    </source>
</reference>
<evidence type="ECO:0000255" key="1">
    <source>
        <dbReference type="HAMAP-Rule" id="MF_00360"/>
    </source>
</evidence>
<evidence type="ECO:0000305" key="2"/>
<proteinExistence type="inferred from homology"/>